<gene>
    <name evidence="1" type="primary">hscB</name>
    <name type="ordered locus">Shewmr4_1742</name>
</gene>
<sequence>MNYFELFKFSPAFDIDTAVLAERYRELQRAVHPDKFANDTEQQRLLSVQRTAQVNDGYQTLKDPIRRAEHMLSLRGIDLSHETTTVKDTAFLMQQMEWREALEDIRDSADPQECIDELYDSFAAYRTKLTKLLTAQLSSDSEEDALLAADQVRKLKFMAKLHDELTRIEDALLD</sequence>
<feature type="chain" id="PRO_1000083044" description="Co-chaperone protein HscB homolog">
    <location>
        <begin position="1"/>
        <end position="174"/>
    </location>
</feature>
<feature type="domain" description="J" evidence="1">
    <location>
        <begin position="2"/>
        <end position="74"/>
    </location>
</feature>
<dbReference type="EMBL" id="CP000446">
    <property type="protein sequence ID" value="ABI38816.1"/>
    <property type="molecule type" value="Genomic_DNA"/>
</dbReference>
<dbReference type="RefSeq" id="WP_011622513.1">
    <property type="nucleotide sequence ID" value="NC_008321.1"/>
</dbReference>
<dbReference type="SMR" id="Q0HJF1"/>
<dbReference type="KEGG" id="she:Shewmr4_1742"/>
<dbReference type="HOGENOM" id="CLU_068529_2_0_6"/>
<dbReference type="GO" id="GO:1990230">
    <property type="term" value="C:iron-sulfur cluster transfer complex"/>
    <property type="evidence" value="ECO:0007669"/>
    <property type="project" value="TreeGrafter"/>
</dbReference>
<dbReference type="GO" id="GO:0001671">
    <property type="term" value="F:ATPase activator activity"/>
    <property type="evidence" value="ECO:0007669"/>
    <property type="project" value="InterPro"/>
</dbReference>
<dbReference type="GO" id="GO:0051087">
    <property type="term" value="F:protein-folding chaperone binding"/>
    <property type="evidence" value="ECO:0007669"/>
    <property type="project" value="InterPro"/>
</dbReference>
<dbReference type="GO" id="GO:0044571">
    <property type="term" value="P:[2Fe-2S] cluster assembly"/>
    <property type="evidence" value="ECO:0007669"/>
    <property type="project" value="InterPro"/>
</dbReference>
<dbReference type="GO" id="GO:0051259">
    <property type="term" value="P:protein complex oligomerization"/>
    <property type="evidence" value="ECO:0007669"/>
    <property type="project" value="InterPro"/>
</dbReference>
<dbReference type="GO" id="GO:0006457">
    <property type="term" value="P:protein folding"/>
    <property type="evidence" value="ECO:0007669"/>
    <property type="project" value="UniProtKB-UniRule"/>
</dbReference>
<dbReference type="CDD" id="cd06257">
    <property type="entry name" value="DnaJ"/>
    <property type="match status" value="1"/>
</dbReference>
<dbReference type="FunFam" id="1.10.287.110:FF:000008">
    <property type="entry name" value="Co-chaperone protein HscB"/>
    <property type="match status" value="1"/>
</dbReference>
<dbReference type="Gene3D" id="1.10.287.110">
    <property type="entry name" value="DnaJ domain"/>
    <property type="match status" value="1"/>
</dbReference>
<dbReference type="Gene3D" id="1.20.1280.20">
    <property type="entry name" value="HscB, C-terminal domain"/>
    <property type="match status" value="1"/>
</dbReference>
<dbReference type="HAMAP" id="MF_00682">
    <property type="entry name" value="HscB"/>
    <property type="match status" value="1"/>
</dbReference>
<dbReference type="InterPro" id="IPR001623">
    <property type="entry name" value="DnaJ_domain"/>
</dbReference>
<dbReference type="InterPro" id="IPR004640">
    <property type="entry name" value="HscB"/>
</dbReference>
<dbReference type="InterPro" id="IPR036386">
    <property type="entry name" value="HscB_C_sf"/>
</dbReference>
<dbReference type="InterPro" id="IPR009073">
    <property type="entry name" value="HscB_oligo_C"/>
</dbReference>
<dbReference type="InterPro" id="IPR036869">
    <property type="entry name" value="J_dom_sf"/>
</dbReference>
<dbReference type="NCBIfam" id="TIGR00714">
    <property type="entry name" value="hscB"/>
    <property type="match status" value="1"/>
</dbReference>
<dbReference type="NCBIfam" id="NF003449">
    <property type="entry name" value="PRK05014.1"/>
    <property type="match status" value="1"/>
</dbReference>
<dbReference type="PANTHER" id="PTHR14021">
    <property type="entry name" value="IRON-SULFUR CLUSTER CO-CHAPERONE PROTEIN HSCB"/>
    <property type="match status" value="1"/>
</dbReference>
<dbReference type="PANTHER" id="PTHR14021:SF15">
    <property type="entry name" value="IRON-SULFUR CLUSTER CO-CHAPERONE PROTEIN HSCB"/>
    <property type="match status" value="1"/>
</dbReference>
<dbReference type="Pfam" id="PF07743">
    <property type="entry name" value="HSCB_C"/>
    <property type="match status" value="1"/>
</dbReference>
<dbReference type="SMART" id="SM00271">
    <property type="entry name" value="DnaJ"/>
    <property type="match status" value="1"/>
</dbReference>
<dbReference type="SUPFAM" id="SSF46565">
    <property type="entry name" value="Chaperone J-domain"/>
    <property type="match status" value="1"/>
</dbReference>
<dbReference type="SUPFAM" id="SSF47144">
    <property type="entry name" value="HSC20 (HSCB), C-terminal oligomerisation domain"/>
    <property type="match status" value="1"/>
</dbReference>
<dbReference type="PROSITE" id="PS50076">
    <property type="entry name" value="DNAJ_2"/>
    <property type="match status" value="1"/>
</dbReference>
<evidence type="ECO:0000255" key="1">
    <source>
        <dbReference type="HAMAP-Rule" id="MF_00682"/>
    </source>
</evidence>
<protein>
    <recommendedName>
        <fullName evidence="1">Co-chaperone protein HscB homolog</fullName>
    </recommendedName>
</protein>
<comment type="function">
    <text evidence="1">Co-chaperone involved in the maturation of iron-sulfur cluster-containing proteins. Seems to help targeting proteins to be folded toward HscA.</text>
</comment>
<comment type="subunit">
    <text evidence="1">Interacts with HscA and stimulates its ATPase activity.</text>
</comment>
<comment type="similarity">
    <text evidence="1">Belongs to the HscB family.</text>
</comment>
<keyword id="KW-0143">Chaperone</keyword>
<reference key="1">
    <citation type="submission" date="2006-08" db="EMBL/GenBank/DDBJ databases">
        <title>Complete sequence of Shewanella sp. MR-4.</title>
        <authorList>
            <consortium name="US DOE Joint Genome Institute"/>
            <person name="Copeland A."/>
            <person name="Lucas S."/>
            <person name="Lapidus A."/>
            <person name="Barry K."/>
            <person name="Detter J.C."/>
            <person name="Glavina del Rio T."/>
            <person name="Hammon N."/>
            <person name="Israni S."/>
            <person name="Dalin E."/>
            <person name="Tice H."/>
            <person name="Pitluck S."/>
            <person name="Kiss H."/>
            <person name="Brettin T."/>
            <person name="Bruce D."/>
            <person name="Han C."/>
            <person name="Tapia R."/>
            <person name="Gilna P."/>
            <person name="Schmutz J."/>
            <person name="Larimer F."/>
            <person name="Land M."/>
            <person name="Hauser L."/>
            <person name="Kyrpides N."/>
            <person name="Mikhailova N."/>
            <person name="Nealson K."/>
            <person name="Konstantinidis K."/>
            <person name="Klappenbach J."/>
            <person name="Tiedje J."/>
            <person name="Richardson P."/>
        </authorList>
    </citation>
    <scope>NUCLEOTIDE SEQUENCE [LARGE SCALE GENOMIC DNA]</scope>
    <source>
        <strain>MR-4</strain>
    </source>
</reference>
<organism>
    <name type="scientific">Shewanella sp. (strain MR-4)</name>
    <dbReference type="NCBI Taxonomy" id="60480"/>
    <lineage>
        <taxon>Bacteria</taxon>
        <taxon>Pseudomonadati</taxon>
        <taxon>Pseudomonadota</taxon>
        <taxon>Gammaproteobacteria</taxon>
        <taxon>Alteromonadales</taxon>
        <taxon>Shewanellaceae</taxon>
        <taxon>Shewanella</taxon>
    </lineage>
</organism>
<name>HSCB_SHESM</name>
<accession>Q0HJF1</accession>
<proteinExistence type="inferred from homology"/>